<protein>
    <recommendedName>
        <fullName>Peptidyl-prolyl cis-trans isomerase G</fullName>
        <shortName>PPIase G</shortName>
        <shortName>Peptidyl-prolyl isomerase G</shortName>
        <ecNumber evidence="4">5.2.1.8</ecNumber>
    </recommendedName>
    <alternativeName>
        <fullName>Cyclophilin G</fullName>
    </alternativeName>
    <alternativeName>
        <fullName>Matrin cyclophilin</fullName>
        <shortName>Matrin-cyp</shortName>
    </alternativeName>
    <alternativeName>
        <fullName>Rotamase G</fullName>
    </alternativeName>
</protein>
<dbReference type="EC" id="5.2.1.8" evidence="4"/>
<dbReference type="EMBL" id="AF043642">
    <property type="protein sequence ID" value="AAC00191.1"/>
    <property type="molecule type" value="mRNA"/>
</dbReference>
<dbReference type="EMBL" id="BC085723">
    <property type="protein sequence ID" value="AAH85723.1"/>
    <property type="molecule type" value="mRNA"/>
</dbReference>
<dbReference type="RefSeq" id="NP_113981.1">
    <property type="nucleotide sequence ID" value="NM_031793.1"/>
</dbReference>
<dbReference type="SMR" id="O55035"/>
<dbReference type="FunCoup" id="O55035">
    <property type="interactions" value="3069"/>
</dbReference>
<dbReference type="IntAct" id="O55035">
    <property type="interactions" value="1"/>
</dbReference>
<dbReference type="STRING" id="10116.ENSRNOP00000010216"/>
<dbReference type="iPTMnet" id="O55035"/>
<dbReference type="PhosphoSitePlus" id="O55035"/>
<dbReference type="jPOST" id="O55035"/>
<dbReference type="PaxDb" id="10116-ENSRNOP00000010216"/>
<dbReference type="GeneID" id="83624"/>
<dbReference type="KEGG" id="rno:83624"/>
<dbReference type="UCSC" id="RGD:620315">
    <property type="organism name" value="rat"/>
</dbReference>
<dbReference type="AGR" id="RGD:620315"/>
<dbReference type="CTD" id="9360"/>
<dbReference type="RGD" id="620315">
    <property type="gene designation" value="Ppig"/>
</dbReference>
<dbReference type="eggNOG" id="KOG0546">
    <property type="taxonomic scope" value="Eukaryota"/>
</dbReference>
<dbReference type="InParanoid" id="O55035"/>
<dbReference type="OrthoDB" id="6630374at2759"/>
<dbReference type="PhylomeDB" id="O55035"/>
<dbReference type="PRO" id="PR:O55035"/>
<dbReference type="Proteomes" id="UP000002494">
    <property type="component" value="Unplaced"/>
</dbReference>
<dbReference type="GO" id="GO:0005737">
    <property type="term" value="C:cytoplasm"/>
    <property type="evidence" value="ECO:0000318"/>
    <property type="project" value="GO_Central"/>
</dbReference>
<dbReference type="GO" id="GO:0016363">
    <property type="term" value="C:nuclear matrix"/>
    <property type="evidence" value="ECO:0000314"/>
    <property type="project" value="RGD"/>
</dbReference>
<dbReference type="GO" id="GO:0016607">
    <property type="term" value="C:nuclear speck"/>
    <property type="evidence" value="ECO:0007669"/>
    <property type="project" value="UniProtKB-SubCell"/>
</dbReference>
<dbReference type="GO" id="GO:0005634">
    <property type="term" value="C:nucleus"/>
    <property type="evidence" value="ECO:0000318"/>
    <property type="project" value="GO_Central"/>
</dbReference>
<dbReference type="GO" id="GO:0016018">
    <property type="term" value="F:cyclosporin A binding"/>
    <property type="evidence" value="ECO:0000318"/>
    <property type="project" value="GO_Central"/>
</dbReference>
<dbReference type="GO" id="GO:0003755">
    <property type="term" value="F:peptidyl-prolyl cis-trans isomerase activity"/>
    <property type="evidence" value="ECO:0000314"/>
    <property type="project" value="RGD"/>
</dbReference>
<dbReference type="GO" id="GO:0006457">
    <property type="term" value="P:protein folding"/>
    <property type="evidence" value="ECO:0000318"/>
    <property type="project" value="GO_Central"/>
</dbReference>
<dbReference type="FunFam" id="2.40.100.10:FF:000005">
    <property type="entry name" value="Peptidyl-prolyl cis-trans isomerase G"/>
    <property type="match status" value="1"/>
</dbReference>
<dbReference type="Gene3D" id="2.40.100.10">
    <property type="entry name" value="Cyclophilin-like"/>
    <property type="match status" value="1"/>
</dbReference>
<dbReference type="InterPro" id="IPR029000">
    <property type="entry name" value="Cyclophilin-like_dom_sf"/>
</dbReference>
<dbReference type="InterPro" id="IPR020892">
    <property type="entry name" value="Cyclophilin-type_PPIase_CS"/>
</dbReference>
<dbReference type="InterPro" id="IPR002130">
    <property type="entry name" value="Cyclophilin-type_PPIase_dom"/>
</dbReference>
<dbReference type="PANTHER" id="PTHR11071">
    <property type="entry name" value="PEPTIDYL-PROLYL CIS-TRANS ISOMERASE"/>
    <property type="match status" value="1"/>
</dbReference>
<dbReference type="PANTHER" id="PTHR11071:SF292">
    <property type="entry name" value="PEPTIDYL-PROLYL CIS-TRANS ISOMERASE G"/>
    <property type="match status" value="1"/>
</dbReference>
<dbReference type="Pfam" id="PF00160">
    <property type="entry name" value="Pro_isomerase"/>
    <property type="match status" value="1"/>
</dbReference>
<dbReference type="PRINTS" id="PR00153">
    <property type="entry name" value="CSAPPISMRASE"/>
</dbReference>
<dbReference type="SUPFAM" id="SSF50891">
    <property type="entry name" value="Cyclophilin-like"/>
    <property type="match status" value="1"/>
</dbReference>
<dbReference type="PROSITE" id="PS00170">
    <property type="entry name" value="CSA_PPIASE_1"/>
    <property type="match status" value="1"/>
</dbReference>
<dbReference type="PROSITE" id="PS50072">
    <property type="entry name" value="CSA_PPIASE_2"/>
    <property type="match status" value="1"/>
</dbReference>
<name>PPIG_RAT</name>
<proteinExistence type="evidence at protein level"/>
<gene>
    <name type="primary">Ppig</name>
</gene>
<feature type="chain" id="PRO_0000064151" description="Peptidyl-prolyl cis-trans isomerase G">
    <location>
        <begin position="1"/>
        <end position="752"/>
    </location>
</feature>
<feature type="domain" description="PPIase cyclophilin-type" evidence="2">
    <location>
        <begin position="11"/>
        <end position="176"/>
    </location>
</feature>
<feature type="region of interest" description="Disordered" evidence="3">
    <location>
        <begin position="182"/>
        <end position="752"/>
    </location>
</feature>
<feature type="compositionally biased region" description="Basic residues" evidence="3">
    <location>
        <begin position="182"/>
        <end position="193"/>
    </location>
</feature>
<feature type="compositionally biased region" description="Low complexity" evidence="3">
    <location>
        <begin position="194"/>
        <end position="214"/>
    </location>
</feature>
<feature type="compositionally biased region" description="Basic residues" evidence="3">
    <location>
        <begin position="226"/>
        <end position="251"/>
    </location>
</feature>
<feature type="compositionally biased region" description="Basic and acidic residues" evidence="3">
    <location>
        <begin position="290"/>
        <end position="308"/>
    </location>
</feature>
<feature type="compositionally biased region" description="Basic residues" evidence="3">
    <location>
        <begin position="327"/>
        <end position="345"/>
    </location>
</feature>
<feature type="compositionally biased region" description="Basic and acidic residues" evidence="3">
    <location>
        <begin position="346"/>
        <end position="366"/>
    </location>
</feature>
<feature type="compositionally biased region" description="Basic and acidic residues" evidence="3">
    <location>
        <begin position="377"/>
        <end position="447"/>
    </location>
</feature>
<feature type="compositionally biased region" description="Basic residues" evidence="3">
    <location>
        <begin position="448"/>
        <end position="461"/>
    </location>
</feature>
<feature type="compositionally biased region" description="Basic and acidic residues" evidence="3">
    <location>
        <begin position="462"/>
        <end position="552"/>
    </location>
</feature>
<feature type="compositionally biased region" description="Basic and acidic residues" evidence="3">
    <location>
        <begin position="577"/>
        <end position="598"/>
    </location>
</feature>
<feature type="compositionally biased region" description="Basic residues" evidence="3">
    <location>
        <begin position="599"/>
        <end position="625"/>
    </location>
</feature>
<feature type="compositionally biased region" description="Basic and acidic residues" evidence="3">
    <location>
        <begin position="626"/>
        <end position="682"/>
    </location>
</feature>
<feature type="compositionally biased region" description="Polar residues" evidence="3">
    <location>
        <begin position="685"/>
        <end position="705"/>
    </location>
</feature>
<feature type="compositionally biased region" description="Basic and acidic residues" evidence="3">
    <location>
        <begin position="706"/>
        <end position="752"/>
    </location>
</feature>
<feature type="modified residue" description="Phosphoserine" evidence="1">
    <location>
        <position position="252"/>
    </location>
</feature>
<feature type="modified residue" description="Phosphoserine" evidence="1">
    <location>
        <position position="254"/>
    </location>
</feature>
<feature type="modified residue" description="Phosphoserine" evidence="1">
    <location>
        <position position="255"/>
    </location>
</feature>
<feature type="modified residue" description="Phosphoserine" evidence="1">
    <location>
        <position position="257"/>
    </location>
</feature>
<feature type="modified residue" description="Phosphoserine" evidence="1">
    <location>
        <position position="288"/>
    </location>
</feature>
<feature type="modified residue" description="Phosphoserine" evidence="1">
    <location>
        <position position="313"/>
    </location>
</feature>
<feature type="modified residue" description="Phosphoserine" evidence="6">
    <location>
        <position position="354"/>
    </location>
</feature>
<feature type="modified residue" description="Phosphothreonine" evidence="6">
    <location>
        <position position="356"/>
    </location>
</feature>
<feature type="modified residue" description="Phosphoserine" evidence="1">
    <location>
        <position position="384"/>
    </location>
</feature>
<feature type="modified residue" description="Phosphoserine" evidence="7">
    <location>
        <position position="395"/>
    </location>
</feature>
<feature type="modified residue" description="Phosphoserine" evidence="1">
    <location>
        <position position="411"/>
    </location>
</feature>
<feature type="modified residue" description="Phosphoserine" evidence="1">
    <location>
        <position position="413"/>
    </location>
</feature>
<feature type="modified residue" description="Phosphoserine" evidence="7">
    <location>
        <position position="685"/>
    </location>
</feature>
<feature type="modified residue" description="Phosphoserine" evidence="1">
    <location>
        <position position="688"/>
    </location>
</feature>
<feature type="modified residue" description="Phosphoserine" evidence="1">
    <location>
        <position position="694"/>
    </location>
</feature>
<feature type="modified residue" description="Phosphoserine" evidence="1">
    <location>
        <position position="742"/>
    </location>
</feature>
<feature type="modified residue" description="Phosphoserine" evidence="1">
    <location>
        <position position="743"/>
    </location>
</feature>
<feature type="modified residue" description="Phosphothreonine" evidence="1">
    <location>
        <position position="746"/>
    </location>
</feature>
<feature type="modified residue" description="Phosphoserine" evidence="1">
    <location>
        <position position="751"/>
    </location>
</feature>
<feature type="cross-link" description="Glycyl lysine isopeptide (Lys-Gly) (interchain with G-Cter in SUMO2)" evidence="1">
    <location>
        <position position="390"/>
    </location>
</feature>
<feature type="cross-link" description="Glycyl lysine isopeptide (Lys-Gly) (interchain with G-Cter in SUMO2)" evidence="1">
    <location>
        <position position="691"/>
    </location>
</feature>
<feature type="sequence conflict" description="In Ref. 1; AAC00191." evidence="5" ref="1">
    <original>S</original>
    <variation>T</variation>
    <location>
        <position position="219"/>
    </location>
</feature>
<feature type="sequence conflict" description="In Ref. 1; AAC00191." evidence="5" ref="1">
    <original>F</original>
    <variation>S</variation>
    <location>
        <position position="327"/>
    </location>
</feature>
<feature type="sequence conflict" description="In Ref. 1; AAC00191." evidence="5" ref="1">
    <original>K</original>
    <variation>G</variation>
    <location>
        <position position="417"/>
    </location>
</feature>
<feature type="sequence conflict" description="In Ref. 1; AAC00191." evidence="5" ref="1">
    <original>EK</original>
    <variation>GG</variation>
    <location>
        <begin position="421"/>
        <end position="422"/>
    </location>
</feature>
<feature type="sequence conflict" description="In Ref. 1; AAC00191." evidence="5" ref="1">
    <original>S</original>
    <variation>L</variation>
    <location>
        <position position="429"/>
    </location>
</feature>
<feature type="sequence conflict" description="In Ref. 1; AAC00191." evidence="5" ref="1">
    <original>E</original>
    <variation>G</variation>
    <location>
        <position position="441"/>
    </location>
</feature>
<comment type="function">
    <text evidence="4">PPIase that catalyzes the cis-trans isomerization of proline imidic peptide bonds in oligopeptides and may therefore assist protein folding. May be implicated in the folding, transport, and assembly of proteins. May play an important role in the regulation of pre-mRNA splicing.</text>
</comment>
<comment type="catalytic activity">
    <reaction evidence="4">
        <text>[protein]-peptidylproline (omega=180) = [protein]-peptidylproline (omega=0)</text>
        <dbReference type="Rhea" id="RHEA:16237"/>
        <dbReference type="Rhea" id="RHEA-COMP:10747"/>
        <dbReference type="Rhea" id="RHEA-COMP:10748"/>
        <dbReference type="ChEBI" id="CHEBI:83833"/>
        <dbReference type="ChEBI" id="CHEBI:83834"/>
        <dbReference type="EC" id="5.2.1.8"/>
    </reaction>
</comment>
<comment type="activity regulation">
    <text evidence="4">Inhibited by cyclosporin A (CsA).</text>
</comment>
<comment type="subunit">
    <text evidence="1">Interacts with CLK1, PNN and with the phosphorylated C-terminal domain of RNA polymerase II.</text>
</comment>
<comment type="subcellular location">
    <subcellularLocation>
        <location evidence="4">Nucleus matrix</location>
    </subcellularLocation>
    <subcellularLocation>
        <location evidence="4">Nucleus speckle</location>
    </subcellularLocation>
    <text evidence="4">Colocalizes with splicing factors at nuclear speckles.</text>
</comment>
<comment type="domain">
    <text evidence="1">The RS domain is required for the interaction with the phosphorylated C-terminal domain of RNA polymerase II.</text>
</comment>
<evidence type="ECO:0000250" key="1">
    <source>
        <dbReference type="UniProtKB" id="Q13427"/>
    </source>
</evidence>
<evidence type="ECO:0000255" key="2">
    <source>
        <dbReference type="PROSITE-ProRule" id="PRU00156"/>
    </source>
</evidence>
<evidence type="ECO:0000256" key="3">
    <source>
        <dbReference type="SAM" id="MobiDB-lite"/>
    </source>
</evidence>
<evidence type="ECO:0000269" key="4">
    <source>
    </source>
</evidence>
<evidence type="ECO:0000305" key="5"/>
<evidence type="ECO:0007744" key="6">
    <source>
    </source>
</evidence>
<evidence type="ECO:0007744" key="7">
    <source>
    </source>
</evidence>
<accession>O55035</accession>
<accession>Q5U346</accession>
<organism>
    <name type="scientific">Rattus norvegicus</name>
    <name type="common">Rat</name>
    <dbReference type="NCBI Taxonomy" id="10116"/>
    <lineage>
        <taxon>Eukaryota</taxon>
        <taxon>Metazoa</taxon>
        <taxon>Chordata</taxon>
        <taxon>Craniata</taxon>
        <taxon>Vertebrata</taxon>
        <taxon>Euteleostomi</taxon>
        <taxon>Mammalia</taxon>
        <taxon>Eutheria</taxon>
        <taxon>Euarchontoglires</taxon>
        <taxon>Glires</taxon>
        <taxon>Rodentia</taxon>
        <taxon>Myomorpha</taxon>
        <taxon>Muroidea</taxon>
        <taxon>Muridae</taxon>
        <taxon>Murinae</taxon>
        <taxon>Rattus</taxon>
    </lineage>
</organism>
<reference key="1">
    <citation type="journal article" date="1998" name="J. Biol. Chem.">
        <title>Matrin CYP, an SR-rich cyclophilin that associates with the nuclear matrix and splicing factors.</title>
        <authorList>
            <person name="Mortillaro M.J."/>
            <person name="Berezney R."/>
        </authorList>
    </citation>
    <scope>NUCLEOTIDE SEQUENCE [MRNA]</scope>
    <scope>FUNCTION</scope>
    <scope>CATALYTIC ACTIVITY</scope>
    <scope>ACTIVITY REGULATION</scope>
    <scope>PHOSPHORYLATION</scope>
    <scope>SUBCELLULAR LOCATION</scope>
    <source>
        <strain>Sprague-Dawley</strain>
        <tissue>Insulinoma</tissue>
    </source>
</reference>
<reference key="2">
    <citation type="journal article" date="2004" name="Genome Res.">
        <title>The status, quality, and expansion of the NIH full-length cDNA project: the Mammalian Gene Collection (MGC).</title>
        <authorList>
            <consortium name="The MGC Project Team"/>
        </authorList>
    </citation>
    <scope>NUCLEOTIDE SEQUENCE [LARGE SCALE MRNA]</scope>
    <source>
        <tissue>Lung</tissue>
    </source>
</reference>
<reference key="3">
    <citation type="journal article" date="2006" name="Proc. Natl. Acad. Sci. U.S.A.">
        <title>Quantitative phosphoproteomics of vasopressin-sensitive renal cells: regulation of aquaporin-2 phosphorylation at two sites.</title>
        <authorList>
            <person name="Hoffert J.D."/>
            <person name="Pisitkun T."/>
            <person name="Wang G."/>
            <person name="Shen R.-F."/>
            <person name="Knepper M.A."/>
        </authorList>
    </citation>
    <scope>PHOSPHORYLATION [LARGE SCALE ANALYSIS] AT SER-354 AND THR-356</scope>
    <scope>IDENTIFICATION BY MASS SPECTROMETRY [LARGE SCALE ANALYSIS]</scope>
</reference>
<reference key="4">
    <citation type="journal article" date="2012" name="Nat. Commun.">
        <title>Quantitative maps of protein phosphorylation sites across 14 different rat organs and tissues.</title>
        <authorList>
            <person name="Lundby A."/>
            <person name="Secher A."/>
            <person name="Lage K."/>
            <person name="Nordsborg N.B."/>
            <person name="Dmytriyev A."/>
            <person name="Lundby C."/>
            <person name="Olsen J.V."/>
        </authorList>
    </citation>
    <scope>PHOSPHORYLATION [LARGE SCALE ANALYSIS] AT SER-395 AND SER-685</scope>
    <scope>IDENTIFICATION BY MASS SPECTROMETRY [LARGE SCALE ANALYSIS]</scope>
</reference>
<sequence>MGIKVQRPRCFFDIAINNQPAGRVVFELFSDVCPKTCENFRCLCTGEKGTGKSTQKPLHYKSCLFHRVVKDFMVQGGDFSEGNGRGGESIYGGFFEDESFAVKHNKEFLLSMANRGKDTNGSQFFITTKPTPHLDGHHVVFGQVISGQEVVREIENQKTDAASKPFAEVRILSCGELVPKSKVKKEEKKRHKSSSSSSSSDSDSSSDSQSSSDSSDSESASEEKSRKRKKKHRKNSRKHKKEKKKRKKSKKSPSSESEADNVDAQPQSTVRPEEIPPIPENRFLMRKSPPKADDKERKNRERERERECNPPNSQPASYQRRFLVTRFGRKIKGRGPRRYRTPSRSRSRDRFRRSETPPHWRQEMQRAQRMRVSSGERWIKGDKSELNEIKENQRSPVRVKEKKITDHRHMSESPNRKIEKEKKVKDHKSESKERDIRRNSEKDDKYNKNKVKKRGKSKSRSKSKERSKSKERDSKHSRHEDKRVRSRSKERDHETTKEKEKQLDSKGKDQERSRSKENSKQVESKSNEHDHSKSKEKDRRAQSRSRERDLTKSKHSYNSRTRERSRSRDRSRRVRSRSHDRDRSRSKEYHRYREQEYRRRGRSRSRDRRTPGRSRSKDRRRRRRDSRSSEREESQSRNKEKYRSQDSKSSHRKENSEGEKRMYSKSRDHSSSNNNREKKADIDQSPVSKTKQSSQDNEVKSSTLKNQEDEKTRSPVEKENQKSKGQENDHVHDKNKKCDHESSPGTDEDKSG</sequence>
<keyword id="KW-0413">Isomerase</keyword>
<keyword id="KW-1017">Isopeptide bond</keyword>
<keyword id="KW-0539">Nucleus</keyword>
<keyword id="KW-0597">Phosphoprotein</keyword>
<keyword id="KW-1185">Reference proteome</keyword>
<keyword id="KW-0697">Rotamase</keyword>
<keyword id="KW-0832">Ubl conjugation</keyword>